<reference key="1">
    <citation type="journal article" date="1990" name="Virology">
        <title>Nucleotide sequence and transcriptional analysis of molecular clones of CAEV which generate infectious virus.</title>
        <authorList>
            <person name="Saltarelli M."/>
            <person name="Querat G."/>
            <person name="Konings D.A.M."/>
            <person name="Vigne R."/>
            <person name="Clements J.E."/>
        </authorList>
    </citation>
    <scope>NUCLEOTIDE SEQUENCE [GENOMIC RNA]</scope>
</reference>
<proteinExistence type="inferred from homology"/>
<keyword id="KW-0167">Capsid protein</keyword>
<keyword id="KW-0945">Host-virus interaction</keyword>
<keyword id="KW-0479">Metal-binding</keyword>
<keyword id="KW-1185">Reference proteome</keyword>
<keyword id="KW-0677">Repeat</keyword>
<keyword id="KW-1198">Viral budding</keyword>
<keyword id="KW-1187">Viral budding via the host ESCRT complexes</keyword>
<keyword id="KW-1188">Viral release from host cell</keyword>
<keyword id="KW-0946">Virion</keyword>
<keyword id="KW-0862">Zinc</keyword>
<keyword id="KW-0863">Zinc-finger</keyword>
<comment type="subcellular location">
    <molecule>Matrix protein p16</molecule>
    <subcellularLocation>
        <location evidence="4">Virion</location>
    </subcellularLocation>
</comment>
<comment type="subcellular location">
    <molecule>Capsid protein p25</molecule>
    <subcellularLocation>
        <location evidence="4">Virion</location>
    </subcellularLocation>
</comment>
<comment type="subcellular location">
    <molecule>Nucleocapsid protein p14</molecule>
    <subcellularLocation>
        <location evidence="4">Virion</location>
    </subcellularLocation>
</comment>
<comment type="domain">
    <text evidence="1">Late-budding domains (L domains) are short sequence motifs essential for viral particle budding. They recruit proteins of the host ESCRT machinery (Endosomal Sorting Complex Required for Transport) or ESCRT-associated proteins. Nucleocapsid protein p14 contains one L domain: a PTAP/PSAP motif, which interacts with the UEV domain of TSG101 (By similarity).</text>
</comment>
<comment type="sequence caution" evidence="4">
    <conflict type="erroneous initiation">
        <sequence resource="EMBL-CDS" id="AAA91825"/>
    </conflict>
</comment>
<sequence>MARQVSGGKRDYPELEKCIKHACKIKVRLRGEHLTEGNCLWCLKTLDYMFEDHKEEPWTKVKFRTIWQKVKNLTPEESNKKDFMSLQATLAGLMCCQMGMRPETLQDAMATVIMKDGLLEQEEKKEDKREKEESVFPIVVQAAGGRSWKAVDSVMFQQLQTVAMQHGLVSEDFERQLAYYATTWTSKDILEVLAMMPGNRAQKELIQGKLNEEAERWRRNNPPPPAGGGLTVDQIMGVGQTNQAAAQANMDQARQICLQWVINALRAVRHMAHRPGNPMLVKQKTNEPYEDFAARLLEAIDAEPVTQPIKDYLKLTLSYTNASADCQKQMDRTLGQRVQQASVEEKMQACRDVGSEGFKMQLLAQALRPGKGKGNGQPQRCYNCGKPGHQARQCRQGIICHNCGKRGHMQKECRGKRDIRGKQQGNGRRGIRVVPSAPPME</sequence>
<organism>
    <name type="scientific">Caprine arthritis encephalitis virus (strain Cork)</name>
    <name type="common">CAEV-Co</name>
    <dbReference type="NCBI Taxonomy" id="11661"/>
    <lineage>
        <taxon>Viruses</taxon>
        <taxon>Riboviria</taxon>
        <taxon>Pararnavirae</taxon>
        <taxon>Artverviricota</taxon>
        <taxon>Revtraviricetes</taxon>
        <taxon>Ortervirales</taxon>
        <taxon>Retroviridae</taxon>
        <taxon>Orthoretrovirinae</taxon>
        <taxon>Lentivirus</taxon>
        <taxon>Caprine arthritis encephalitis virus</taxon>
    </lineage>
</organism>
<dbReference type="EMBL" id="M33677">
    <property type="protein sequence ID" value="AAA91825.1"/>
    <property type="status" value="ALT_INIT"/>
    <property type="molecule type" value="Genomic_RNA"/>
</dbReference>
<dbReference type="PIR" id="A45345">
    <property type="entry name" value="A45345"/>
</dbReference>
<dbReference type="RefSeq" id="NP_040938.1">
    <property type="nucleotide sequence ID" value="NC_001463.1"/>
</dbReference>
<dbReference type="SMR" id="P33458"/>
<dbReference type="GeneID" id="1489975"/>
<dbReference type="KEGG" id="vg:1489975"/>
<dbReference type="Proteomes" id="UP000203242">
    <property type="component" value="Segment"/>
</dbReference>
<dbReference type="GO" id="GO:0019028">
    <property type="term" value="C:viral capsid"/>
    <property type="evidence" value="ECO:0007669"/>
    <property type="project" value="UniProtKB-KW"/>
</dbReference>
<dbReference type="GO" id="GO:0003676">
    <property type="term" value="F:nucleic acid binding"/>
    <property type="evidence" value="ECO:0007669"/>
    <property type="project" value="InterPro"/>
</dbReference>
<dbReference type="GO" id="GO:0008270">
    <property type="term" value="F:zinc ion binding"/>
    <property type="evidence" value="ECO:0007669"/>
    <property type="project" value="UniProtKB-KW"/>
</dbReference>
<dbReference type="GO" id="GO:0039702">
    <property type="term" value="P:viral budding via host ESCRT complex"/>
    <property type="evidence" value="ECO:0007669"/>
    <property type="project" value="UniProtKB-KW"/>
</dbReference>
<dbReference type="Gene3D" id="1.10.1200.30">
    <property type="match status" value="1"/>
</dbReference>
<dbReference type="Gene3D" id="1.10.375.10">
    <property type="entry name" value="Human Immunodeficiency Virus Type 1 Capsid Protein"/>
    <property type="match status" value="1"/>
</dbReference>
<dbReference type="Gene3D" id="4.10.60.10">
    <property type="entry name" value="Zinc finger, CCHC-type"/>
    <property type="match status" value="1"/>
</dbReference>
<dbReference type="InterPro" id="IPR045345">
    <property type="entry name" value="Gag_p24_C"/>
</dbReference>
<dbReference type="InterPro" id="IPR050195">
    <property type="entry name" value="Primate_lentivir_Gag_pol-like"/>
</dbReference>
<dbReference type="InterPro" id="IPR008916">
    <property type="entry name" value="Retrov_capsid_C"/>
</dbReference>
<dbReference type="InterPro" id="IPR008919">
    <property type="entry name" value="Retrov_capsid_N"/>
</dbReference>
<dbReference type="InterPro" id="IPR001878">
    <property type="entry name" value="Znf_CCHC"/>
</dbReference>
<dbReference type="InterPro" id="IPR036875">
    <property type="entry name" value="Znf_CCHC_sf"/>
</dbReference>
<dbReference type="PANTHER" id="PTHR40389:SF4">
    <property type="match status" value="1"/>
</dbReference>
<dbReference type="PANTHER" id="PTHR40389">
    <property type="entry name" value="ENDOGENOUS RETROVIRUS GROUP K MEMBER 24 GAG POLYPROTEIN-RELATED"/>
    <property type="match status" value="1"/>
</dbReference>
<dbReference type="Pfam" id="PF00607">
    <property type="entry name" value="Gag_p24"/>
    <property type="match status" value="1"/>
</dbReference>
<dbReference type="Pfam" id="PF19317">
    <property type="entry name" value="Gag_p24_C"/>
    <property type="match status" value="1"/>
</dbReference>
<dbReference type="Pfam" id="PF00098">
    <property type="entry name" value="zf-CCHC"/>
    <property type="match status" value="2"/>
</dbReference>
<dbReference type="SMART" id="SM00343">
    <property type="entry name" value="ZnF_C2HC"/>
    <property type="match status" value="2"/>
</dbReference>
<dbReference type="SUPFAM" id="SSF47353">
    <property type="entry name" value="Retrovirus capsid dimerization domain-like"/>
    <property type="match status" value="1"/>
</dbReference>
<dbReference type="SUPFAM" id="SSF47943">
    <property type="entry name" value="Retrovirus capsid protein, N-terminal core domain"/>
    <property type="match status" value="1"/>
</dbReference>
<dbReference type="SUPFAM" id="SSF57756">
    <property type="entry name" value="Retrovirus zinc finger-like domains"/>
    <property type="match status" value="1"/>
</dbReference>
<dbReference type="PROSITE" id="PS50158">
    <property type="entry name" value="ZF_CCHC"/>
    <property type="match status" value="2"/>
</dbReference>
<protein>
    <recommendedName>
        <fullName>Gag polyprotein</fullName>
    </recommendedName>
    <component>
        <recommendedName>
            <fullName>Matrix protein p16</fullName>
        </recommendedName>
    </component>
    <component>
        <recommendedName>
            <fullName>Capsid protein p25</fullName>
        </recommendedName>
    </component>
    <component>
        <recommendedName>
            <fullName>Nucleocapsid protein p14</fullName>
        </recommendedName>
    </component>
</protein>
<evidence type="ECO:0000250" key="1"/>
<evidence type="ECO:0000255" key="2">
    <source>
        <dbReference type="PROSITE-ProRule" id="PRU00047"/>
    </source>
</evidence>
<evidence type="ECO:0000256" key="3">
    <source>
        <dbReference type="SAM" id="MobiDB-lite"/>
    </source>
</evidence>
<evidence type="ECO:0000305" key="4"/>
<name>GAG_CAEVC</name>
<accession>P33458</accession>
<organismHost>
    <name type="scientific">Capra hircus</name>
    <name type="common">Goat</name>
    <dbReference type="NCBI Taxonomy" id="9925"/>
</organismHost>
<gene>
    <name type="primary">gag</name>
</gene>
<feature type="chain" id="PRO_0000038769" description="Matrix protein p16">
    <location>
        <begin position="1"/>
        <end position="146"/>
    </location>
</feature>
<feature type="chain" id="PRO_0000038770" description="Capsid protein p25">
    <location>
        <begin position="147"/>
        <end position="358"/>
    </location>
</feature>
<feature type="chain" id="PRO_0000038771" description="Nucleocapsid protein p14">
    <location>
        <begin position="359"/>
        <end position="441"/>
    </location>
</feature>
<feature type="zinc finger region" description="CCHC-type 1" evidence="2">
    <location>
        <begin position="379"/>
        <end position="396"/>
    </location>
</feature>
<feature type="zinc finger region" description="CCHC-type 2" evidence="2">
    <location>
        <begin position="398"/>
        <end position="415"/>
    </location>
</feature>
<feature type="region of interest" description="Disordered" evidence="3">
    <location>
        <begin position="419"/>
        <end position="441"/>
    </location>
</feature>
<feature type="short sequence motif" description="PTAP/PSAP motif">
    <location>
        <begin position="435"/>
        <end position="438"/>
    </location>
</feature>